<evidence type="ECO:0000255" key="1">
    <source>
        <dbReference type="HAMAP-Rule" id="MF_00344"/>
    </source>
</evidence>
<sequence>MNTVVTLPTEQAPQTLENVGRFDRPLIIILDFGSQYSELIARRIRETQVYSEVLSYRTTSEQLRQLNPKGIILSGGPSSVYGDNAPHCDPEIWNLGIPVLGVCYGMQLMVNQLGGEVAKADRGEYGKASLYIDDPTDLLTNVEDGTTMWMSHGDSVTQMPSGFELLAHTENTPCAAIADHERKLYGVQFHPEVVHSIGGIALIRNFVYHICDCEPTWTTAAFVEEAIREIRTRVGEKRVLLALSGGVDSSTLAFLLYKAIGEQLTCVFIDQGFMRKYEPERLVKLFQEQFHIPVEYVNARDRFLAKVAGVTDPEEKRRRIGHEFINVFEETSKRLGHFDYLAQGTLYPDVIESADTNADPQTGERVAVKIKSHHNVGGLPKDLRFKLVEPLRKLFKDEVRKVGRSIGLPEEIVQRQPFPGPGLAIRILGEVTSERLNILRDADLIVRQEINQRGMYHDFWQAFAVLLPIRSVGVMGDQRTYAYPIVLRIVTSEDGMTADWARVPYDVLEVISTRIVNEVKGVNRVVYDITSKPPGTIEWE</sequence>
<protein>
    <recommendedName>
        <fullName evidence="1">GMP synthase [glutamine-hydrolyzing]</fullName>
        <ecNumber evidence="1">6.3.5.2</ecNumber>
    </recommendedName>
    <alternativeName>
        <fullName evidence="1">GMP synthetase</fullName>
    </alternativeName>
    <alternativeName>
        <fullName evidence="1">Glutamine amidotransferase</fullName>
    </alternativeName>
</protein>
<comment type="function">
    <text evidence="1">Catalyzes the synthesis of GMP from XMP.</text>
</comment>
<comment type="catalytic activity">
    <reaction evidence="1">
        <text>XMP + L-glutamine + ATP + H2O = GMP + L-glutamate + AMP + diphosphate + 2 H(+)</text>
        <dbReference type="Rhea" id="RHEA:11680"/>
        <dbReference type="ChEBI" id="CHEBI:15377"/>
        <dbReference type="ChEBI" id="CHEBI:15378"/>
        <dbReference type="ChEBI" id="CHEBI:29985"/>
        <dbReference type="ChEBI" id="CHEBI:30616"/>
        <dbReference type="ChEBI" id="CHEBI:33019"/>
        <dbReference type="ChEBI" id="CHEBI:57464"/>
        <dbReference type="ChEBI" id="CHEBI:58115"/>
        <dbReference type="ChEBI" id="CHEBI:58359"/>
        <dbReference type="ChEBI" id="CHEBI:456215"/>
        <dbReference type="EC" id="6.3.5.2"/>
    </reaction>
</comment>
<comment type="pathway">
    <text evidence="1">Purine metabolism; GMP biosynthesis; GMP from XMP (L-Gln route): step 1/1.</text>
</comment>
<comment type="subunit">
    <text evidence="1">Homodimer.</text>
</comment>
<keyword id="KW-0067">ATP-binding</keyword>
<keyword id="KW-0315">Glutamine amidotransferase</keyword>
<keyword id="KW-0332">GMP biosynthesis</keyword>
<keyword id="KW-0436">Ligase</keyword>
<keyword id="KW-0547">Nucleotide-binding</keyword>
<keyword id="KW-0658">Purine biosynthesis</keyword>
<keyword id="KW-1185">Reference proteome</keyword>
<reference key="1">
    <citation type="journal article" date="2013" name="Plant Physiol.">
        <title>A Nostoc punctiforme Sugar Transporter Necessary to Establish a Cyanobacterium-Plant Symbiosis.</title>
        <authorList>
            <person name="Ekman M."/>
            <person name="Picossi S."/>
            <person name="Campbell E.L."/>
            <person name="Meeks J.C."/>
            <person name="Flores E."/>
        </authorList>
    </citation>
    <scope>NUCLEOTIDE SEQUENCE [LARGE SCALE GENOMIC DNA]</scope>
    <source>
        <strain>ATCC 29133 / PCC 73102</strain>
    </source>
</reference>
<dbReference type="EC" id="6.3.5.2" evidence="1"/>
<dbReference type="EMBL" id="CP001037">
    <property type="protein sequence ID" value="ACC79462.1"/>
    <property type="molecule type" value="Genomic_DNA"/>
</dbReference>
<dbReference type="RefSeq" id="WP_012407487.1">
    <property type="nucleotide sequence ID" value="NC_010628.1"/>
</dbReference>
<dbReference type="SMR" id="B2J9G3"/>
<dbReference type="STRING" id="63737.Npun_R0710"/>
<dbReference type="EnsemblBacteria" id="ACC79462">
    <property type="protein sequence ID" value="ACC79462"/>
    <property type="gene ID" value="Npun_R0710"/>
</dbReference>
<dbReference type="KEGG" id="npu:Npun_R0710"/>
<dbReference type="eggNOG" id="COG0518">
    <property type="taxonomic scope" value="Bacteria"/>
</dbReference>
<dbReference type="eggNOG" id="COG0519">
    <property type="taxonomic scope" value="Bacteria"/>
</dbReference>
<dbReference type="HOGENOM" id="CLU_014340_0_5_3"/>
<dbReference type="OrthoDB" id="9802219at2"/>
<dbReference type="PhylomeDB" id="B2J9G3"/>
<dbReference type="UniPathway" id="UPA00189">
    <property type="reaction ID" value="UER00296"/>
</dbReference>
<dbReference type="Proteomes" id="UP000001191">
    <property type="component" value="Chromosome"/>
</dbReference>
<dbReference type="GO" id="GO:0005829">
    <property type="term" value="C:cytosol"/>
    <property type="evidence" value="ECO:0007669"/>
    <property type="project" value="TreeGrafter"/>
</dbReference>
<dbReference type="GO" id="GO:0005524">
    <property type="term" value="F:ATP binding"/>
    <property type="evidence" value="ECO:0007669"/>
    <property type="project" value="UniProtKB-UniRule"/>
</dbReference>
<dbReference type="GO" id="GO:0003921">
    <property type="term" value="F:GMP synthase activity"/>
    <property type="evidence" value="ECO:0007669"/>
    <property type="project" value="InterPro"/>
</dbReference>
<dbReference type="CDD" id="cd01742">
    <property type="entry name" value="GATase1_GMP_Synthase"/>
    <property type="match status" value="1"/>
</dbReference>
<dbReference type="CDD" id="cd01997">
    <property type="entry name" value="GMP_synthase_C"/>
    <property type="match status" value="1"/>
</dbReference>
<dbReference type="FunFam" id="3.30.300.10:FF:000002">
    <property type="entry name" value="GMP synthase [glutamine-hydrolyzing]"/>
    <property type="match status" value="1"/>
</dbReference>
<dbReference type="FunFam" id="3.40.50.620:FF:000001">
    <property type="entry name" value="GMP synthase [glutamine-hydrolyzing]"/>
    <property type="match status" value="1"/>
</dbReference>
<dbReference type="FunFam" id="3.40.50.880:FF:000001">
    <property type="entry name" value="GMP synthase [glutamine-hydrolyzing]"/>
    <property type="match status" value="1"/>
</dbReference>
<dbReference type="Gene3D" id="3.30.300.10">
    <property type="match status" value="1"/>
</dbReference>
<dbReference type="Gene3D" id="3.40.50.880">
    <property type="match status" value="1"/>
</dbReference>
<dbReference type="Gene3D" id="3.40.50.620">
    <property type="entry name" value="HUPs"/>
    <property type="match status" value="1"/>
</dbReference>
<dbReference type="HAMAP" id="MF_00344">
    <property type="entry name" value="GMP_synthase"/>
    <property type="match status" value="1"/>
</dbReference>
<dbReference type="InterPro" id="IPR029062">
    <property type="entry name" value="Class_I_gatase-like"/>
</dbReference>
<dbReference type="InterPro" id="IPR017926">
    <property type="entry name" value="GATASE"/>
</dbReference>
<dbReference type="InterPro" id="IPR001674">
    <property type="entry name" value="GMP_synth_C"/>
</dbReference>
<dbReference type="InterPro" id="IPR004739">
    <property type="entry name" value="GMP_synth_GATase"/>
</dbReference>
<dbReference type="InterPro" id="IPR022955">
    <property type="entry name" value="GMP_synthase"/>
</dbReference>
<dbReference type="InterPro" id="IPR025777">
    <property type="entry name" value="GMPS_ATP_PPase_dom"/>
</dbReference>
<dbReference type="InterPro" id="IPR022310">
    <property type="entry name" value="NAD/GMP_synthase"/>
</dbReference>
<dbReference type="InterPro" id="IPR014729">
    <property type="entry name" value="Rossmann-like_a/b/a_fold"/>
</dbReference>
<dbReference type="NCBIfam" id="TIGR00884">
    <property type="entry name" value="guaA_Cterm"/>
    <property type="match status" value="1"/>
</dbReference>
<dbReference type="NCBIfam" id="TIGR00888">
    <property type="entry name" value="guaA_Nterm"/>
    <property type="match status" value="1"/>
</dbReference>
<dbReference type="NCBIfam" id="NF000848">
    <property type="entry name" value="PRK00074.1"/>
    <property type="match status" value="1"/>
</dbReference>
<dbReference type="PANTHER" id="PTHR11922:SF2">
    <property type="entry name" value="GMP SYNTHASE [GLUTAMINE-HYDROLYZING]"/>
    <property type="match status" value="1"/>
</dbReference>
<dbReference type="PANTHER" id="PTHR11922">
    <property type="entry name" value="GMP SYNTHASE-RELATED"/>
    <property type="match status" value="1"/>
</dbReference>
<dbReference type="Pfam" id="PF00117">
    <property type="entry name" value="GATase"/>
    <property type="match status" value="1"/>
</dbReference>
<dbReference type="Pfam" id="PF00958">
    <property type="entry name" value="GMP_synt_C"/>
    <property type="match status" value="1"/>
</dbReference>
<dbReference type="Pfam" id="PF02540">
    <property type="entry name" value="NAD_synthase"/>
    <property type="match status" value="1"/>
</dbReference>
<dbReference type="PRINTS" id="PR00097">
    <property type="entry name" value="ANTSNTHASEII"/>
</dbReference>
<dbReference type="PRINTS" id="PR00099">
    <property type="entry name" value="CPSGATASE"/>
</dbReference>
<dbReference type="PRINTS" id="PR00096">
    <property type="entry name" value="GATASE"/>
</dbReference>
<dbReference type="SUPFAM" id="SSF52402">
    <property type="entry name" value="Adenine nucleotide alpha hydrolases-like"/>
    <property type="match status" value="1"/>
</dbReference>
<dbReference type="SUPFAM" id="SSF52317">
    <property type="entry name" value="Class I glutamine amidotransferase-like"/>
    <property type="match status" value="1"/>
</dbReference>
<dbReference type="SUPFAM" id="SSF54810">
    <property type="entry name" value="GMP synthetase C-terminal dimerisation domain"/>
    <property type="match status" value="1"/>
</dbReference>
<dbReference type="PROSITE" id="PS51273">
    <property type="entry name" value="GATASE_TYPE_1"/>
    <property type="match status" value="1"/>
</dbReference>
<dbReference type="PROSITE" id="PS51553">
    <property type="entry name" value="GMPS_ATP_PPASE"/>
    <property type="match status" value="1"/>
</dbReference>
<gene>
    <name evidence="1" type="primary">guaA</name>
    <name type="ordered locus">Npun_R0710</name>
</gene>
<name>GUAA_NOSP7</name>
<accession>B2J9G3</accession>
<organism>
    <name type="scientific">Nostoc punctiforme (strain ATCC 29133 / PCC 73102)</name>
    <dbReference type="NCBI Taxonomy" id="63737"/>
    <lineage>
        <taxon>Bacteria</taxon>
        <taxon>Bacillati</taxon>
        <taxon>Cyanobacteriota</taxon>
        <taxon>Cyanophyceae</taxon>
        <taxon>Nostocales</taxon>
        <taxon>Nostocaceae</taxon>
        <taxon>Nostoc</taxon>
    </lineage>
</organism>
<feature type="chain" id="PRO_1000120347" description="GMP synthase [glutamine-hydrolyzing]">
    <location>
        <begin position="1"/>
        <end position="540"/>
    </location>
</feature>
<feature type="domain" description="Glutamine amidotransferase type-1" evidence="1">
    <location>
        <begin position="26"/>
        <end position="216"/>
    </location>
</feature>
<feature type="domain" description="GMPS ATP-PPase" evidence="1">
    <location>
        <begin position="217"/>
        <end position="415"/>
    </location>
</feature>
<feature type="active site" description="Nucleophile" evidence="1">
    <location>
        <position position="103"/>
    </location>
</feature>
<feature type="active site" evidence="1">
    <location>
        <position position="190"/>
    </location>
</feature>
<feature type="active site" evidence="1">
    <location>
        <position position="192"/>
    </location>
</feature>
<feature type="binding site" evidence="1">
    <location>
        <begin position="244"/>
        <end position="250"/>
    </location>
    <ligand>
        <name>ATP</name>
        <dbReference type="ChEBI" id="CHEBI:30616"/>
    </ligand>
</feature>
<proteinExistence type="inferred from homology"/>